<sequence length="130" mass="13764">MSMQDPIADMLTRIRNAQMVGKTSVTMPSSKLKKSVANVLTEEGYVAGFNATDGVKAELTIDLKYFEGKPVIAELDRISRPGLRAYAGKDELPTVRGGLGIAIVSTSKGVMTDRAARAAGVGGEIICTVF</sequence>
<accession>C5BQ75</accession>
<evidence type="ECO:0000255" key="1">
    <source>
        <dbReference type="HAMAP-Rule" id="MF_01302"/>
    </source>
</evidence>
<evidence type="ECO:0000305" key="2"/>
<keyword id="KW-1185">Reference proteome</keyword>
<keyword id="KW-0687">Ribonucleoprotein</keyword>
<keyword id="KW-0689">Ribosomal protein</keyword>
<keyword id="KW-0694">RNA-binding</keyword>
<keyword id="KW-0699">rRNA-binding</keyword>
<reference key="1">
    <citation type="journal article" date="2009" name="PLoS ONE">
        <title>The complete genome of Teredinibacter turnerae T7901: an intracellular endosymbiont of marine wood-boring bivalves (shipworms).</title>
        <authorList>
            <person name="Yang J.C."/>
            <person name="Madupu R."/>
            <person name="Durkin A.S."/>
            <person name="Ekborg N.A."/>
            <person name="Pedamallu C.S."/>
            <person name="Hostetler J.B."/>
            <person name="Radune D."/>
            <person name="Toms B.S."/>
            <person name="Henrissat B."/>
            <person name="Coutinho P.M."/>
            <person name="Schwarz S."/>
            <person name="Field L."/>
            <person name="Trindade-Silva A.E."/>
            <person name="Soares C.A.G."/>
            <person name="Elshahawi S."/>
            <person name="Hanora A."/>
            <person name="Schmidt E.W."/>
            <person name="Haygood M.G."/>
            <person name="Posfai J."/>
            <person name="Benner J."/>
            <person name="Madinger C."/>
            <person name="Nove J."/>
            <person name="Anton B."/>
            <person name="Chaudhary K."/>
            <person name="Foster J."/>
            <person name="Holman A."/>
            <person name="Kumar S."/>
            <person name="Lessard P.A."/>
            <person name="Luyten Y.A."/>
            <person name="Slatko B."/>
            <person name="Wood N."/>
            <person name="Wu B."/>
            <person name="Teplitski M."/>
            <person name="Mougous J.D."/>
            <person name="Ward N."/>
            <person name="Eisen J.A."/>
            <person name="Badger J.H."/>
            <person name="Distel D.L."/>
        </authorList>
    </citation>
    <scope>NUCLEOTIDE SEQUENCE [LARGE SCALE GENOMIC DNA]</scope>
    <source>
        <strain>ATCC 39867 / T7901</strain>
    </source>
</reference>
<dbReference type="EMBL" id="CP001614">
    <property type="protein sequence ID" value="ACR12259.1"/>
    <property type="molecule type" value="Genomic_DNA"/>
</dbReference>
<dbReference type="RefSeq" id="WP_015818371.1">
    <property type="nucleotide sequence ID" value="NC_012997.1"/>
</dbReference>
<dbReference type="SMR" id="C5BQ75"/>
<dbReference type="STRING" id="377629.TERTU_0922"/>
<dbReference type="KEGG" id="ttu:TERTU_0922"/>
<dbReference type="eggNOG" id="COG0096">
    <property type="taxonomic scope" value="Bacteria"/>
</dbReference>
<dbReference type="HOGENOM" id="CLU_098428_0_0_6"/>
<dbReference type="OrthoDB" id="9802617at2"/>
<dbReference type="Proteomes" id="UP000009080">
    <property type="component" value="Chromosome"/>
</dbReference>
<dbReference type="GO" id="GO:1990904">
    <property type="term" value="C:ribonucleoprotein complex"/>
    <property type="evidence" value="ECO:0007669"/>
    <property type="project" value="UniProtKB-KW"/>
</dbReference>
<dbReference type="GO" id="GO:0005840">
    <property type="term" value="C:ribosome"/>
    <property type="evidence" value="ECO:0007669"/>
    <property type="project" value="UniProtKB-KW"/>
</dbReference>
<dbReference type="GO" id="GO:0019843">
    <property type="term" value="F:rRNA binding"/>
    <property type="evidence" value="ECO:0007669"/>
    <property type="project" value="UniProtKB-UniRule"/>
</dbReference>
<dbReference type="GO" id="GO:0003735">
    <property type="term" value="F:structural constituent of ribosome"/>
    <property type="evidence" value="ECO:0007669"/>
    <property type="project" value="InterPro"/>
</dbReference>
<dbReference type="GO" id="GO:0006412">
    <property type="term" value="P:translation"/>
    <property type="evidence" value="ECO:0007669"/>
    <property type="project" value="UniProtKB-UniRule"/>
</dbReference>
<dbReference type="FunFam" id="3.30.1370.30:FF:000002">
    <property type="entry name" value="30S ribosomal protein S8"/>
    <property type="match status" value="1"/>
</dbReference>
<dbReference type="FunFam" id="3.30.1490.10:FF:000001">
    <property type="entry name" value="30S ribosomal protein S8"/>
    <property type="match status" value="1"/>
</dbReference>
<dbReference type="Gene3D" id="3.30.1370.30">
    <property type="match status" value="1"/>
</dbReference>
<dbReference type="Gene3D" id="3.30.1490.10">
    <property type="match status" value="1"/>
</dbReference>
<dbReference type="HAMAP" id="MF_01302_B">
    <property type="entry name" value="Ribosomal_uS8_B"/>
    <property type="match status" value="1"/>
</dbReference>
<dbReference type="InterPro" id="IPR000630">
    <property type="entry name" value="Ribosomal_uS8"/>
</dbReference>
<dbReference type="InterPro" id="IPR047863">
    <property type="entry name" value="Ribosomal_uS8_CS"/>
</dbReference>
<dbReference type="InterPro" id="IPR035987">
    <property type="entry name" value="Ribosomal_uS8_sf"/>
</dbReference>
<dbReference type="NCBIfam" id="NF001109">
    <property type="entry name" value="PRK00136.1"/>
    <property type="match status" value="1"/>
</dbReference>
<dbReference type="PANTHER" id="PTHR11758">
    <property type="entry name" value="40S RIBOSOMAL PROTEIN S15A"/>
    <property type="match status" value="1"/>
</dbReference>
<dbReference type="Pfam" id="PF00410">
    <property type="entry name" value="Ribosomal_S8"/>
    <property type="match status" value="1"/>
</dbReference>
<dbReference type="SUPFAM" id="SSF56047">
    <property type="entry name" value="Ribosomal protein S8"/>
    <property type="match status" value="1"/>
</dbReference>
<dbReference type="PROSITE" id="PS00053">
    <property type="entry name" value="RIBOSOMAL_S8"/>
    <property type="match status" value="1"/>
</dbReference>
<organism>
    <name type="scientific">Teredinibacter turnerae (strain ATCC 39867 / T7901)</name>
    <dbReference type="NCBI Taxonomy" id="377629"/>
    <lineage>
        <taxon>Bacteria</taxon>
        <taxon>Pseudomonadati</taxon>
        <taxon>Pseudomonadota</taxon>
        <taxon>Gammaproteobacteria</taxon>
        <taxon>Cellvibrionales</taxon>
        <taxon>Cellvibrionaceae</taxon>
        <taxon>Teredinibacter</taxon>
    </lineage>
</organism>
<comment type="function">
    <text evidence="1">One of the primary rRNA binding proteins, it binds directly to 16S rRNA central domain where it helps coordinate assembly of the platform of the 30S subunit.</text>
</comment>
<comment type="subunit">
    <text evidence="1">Part of the 30S ribosomal subunit. Contacts proteins S5 and S12.</text>
</comment>
<comment type="similarity">
    <text evidence="1">Belongs to the universal ribosomal protein uS8 family.</text>
</comment>
<gene>
    <name evidence="1" type="primary">rpsH</name>
    <name type="ordered locus">TERTU_0922</name>
</gene>
<name>RS8_TERTT</name>
<protein>
    <recommendedName>
        <fullName evidence="1">Small ribosomal subunit protein uS8</fullName>
    </recommendedName>
    <alternativeName>
        <fullName evidence="2">30S ribosomal protein S8</fullName>
    </alternativeName>
</protein>
<proteinExistence type="inferred from homology"/>
<feature type="chain" id="PRO_1000214272" description="Small ribosomal subunit protein uS8">
    <location>
        <begin position="1"/>
        <end position="130"/>
    </location>
</feature>